<organism>
    <name type="scientific">Bacillus cytotoxicus (strain DSM 22905 / CIP 110041 / 391-98 / NVH 391-98)</name>
    <dbReference type="NCBI Taxonomy" id="315749"/>
    <lineage>
        <taxon>Bacteria</taxon>
        <taxon>Bacillati</taxon>
        <taxon>Bacillota</taxon>
        <taxon>Bacilli</taxon>
        <taxon>Bacillales</taxon>
        <taxon>Bacillaceae</taxon>
        <taxon>Bacillus</taxon>
        <taxon>Bacillus cereus group</taxon>
    </lineage>
</organism>
<accession>A7GK37</accession>
<sequence length="166" mass="17634">MRRIDPSKLELEERVVTINRVAKVVKGGRRFRFAALVVVGDKNGHVGFGTGKAQEVPDAIRKAIEDAKKNLIEVPLVGTSIPHEIIGHFGAGEVFLKPAAEGTGVIAGGPVRAVLELAGVQDILSKSLGSNTPINMIRATVNGLSELKRAEEVAKLRGKSVEELLG</sequence>
<evidence type="ECO:0000255" key="1">
    <source>
        <dbReference type="HAMAP-Rule" id="MF_01307"/>
    </source>
</evidence>
<evidence type="ECO:0000305" key="2"/>
<reference key="1">
    <citation type="journal article" date="2008" name="Chem. Biol. Interact.">
        <title>Extending the Bacillus cereus group genomics to putative food-borne pathogens of different toxicity.</title>
        <authorList>
            <person name="Lapidus A."/>
            <person name="Goltsman E."/>
            <person name="Auger S."/>
            <person name="Galleron N."/>
            <person name="Segurens B."/>
            <person name="Dossat C."/>
            <person name="Land M.L."/>
            <person name="Broussolle V."/>
            <person name="Brillard J."/>
            <person name="Guinebretiere M.-H."/>
            <person name="Sanchis V."/>
            <person name="Nguen-the C."/>
            <person name="Lereclus D."/>
            <person name="Richardson P."/>
            <person name="Wincker P."/>
            <person name="Weissenbach J."/>
            <person name="Ehrlich S.D."/>
            <person name="Sorokin A."/>
        </authorList>
    </citation>
    <scope>NUCLEOTIDE SEQUENCE [LARGE SCALE GENOMIC DNA]</scope>
    <source>
        <strain>DSM 22905 / CIP 110041 / 391-98 / NVH 391-98</strain>
    </source>
</reference>
<name>RS5_BACCN</name>
<feature type="chain" id="PRO_0000323071" description="Small ribosomal subunit protein uS5">
    <location>
        <begin position="1"/>
        <end position="166"/>
    </location>
</feature>
<feature type="domain" description="S5 DRBM" evidence="1">
    <location>
        <begin position="11"/>
        <end position="74"/>
    </location>
</feature>
<keyword id="KW-0687">Ribonucleoprotein</keyword>
<keyword id="KW-0689">Ribosomal protein</keyword>
<keyword id="KW-0694">RNA-binding</keyword>
<keyword id="KW-0699">rRNA-binding</keyword>
<protein>
    <recommendedName>
        <fullName evidence="1">Small ribosomal subunit protein uS5</fullName>
    </recommendedName>
    <alternativeName>
        <fullName evidence="2">30S ribosomal protein S5</fullName>
    </alternativeName>
</protein>
<proteinExistence type="inferred from homology"/>
<comment type="function">
    <text evidence="1">With S4 and S12 plays an important role in translational accuracy.</text>
</comment>
<comment type="function">
    <text evidence="1">Located at the back of the 30S subunit body where it stabilizes the conformation of the head with respect to the body.</text>
</comment>
<comment type="subunit">
    <text evidence="1">Part of the 30S ribosomal subunit. Contacts proteins S4 and S8.</text>
</comment>
<comment type="domain">
    <text>The N-terminal domain interacts with the head of the 30S subunit; the C-terminal domain interacts with the body and contacts protein S4. The interaction surface between S4 and S5 is involved in control of translational fidelity.</text>
</comment>
<comment type="similarity">
    <text evidence="1">Belongs to the universal ribosomal protein uS5 family.</text>
</comment>
<dbReference type="EMBL" id="CP000764">
    <property type="protein sequence ID" value="ABS20495.1"/>
    <property type="molecule type" value="Genomic_DNA"/>
</dbReference>
<dbReference type="RefSeq" id="WP_011983260.1">
    <property type="nucleotide sequence ID" value="NC_009674.1"/>
</dbReference>
<dbReference type="SMR" id="A7GK37"/>
<dbReference type="STRING" id="315749.Bcer98_0121"/>
<dbReference type="GeneID" id="33895442"/>
<dbReference type="KEGG" id="bcy:Bcer98_0121"/>
<dbReference type="eggNOG" id="COG0098">
    <property type="taxonomic scope" value="Bacteria"/>
</dbReference>
<dbReference type="HOGENOM" id="CLU_065898_2_2_9"/>
<dbReference type="OrthoDB" id="9809045at2"/>
<dbReference type="Proteomes" id="UP000002300">
    <property type="component" value="Chromosome"/>
</dbReference>
<dbReference type="GO" id="GO:0015935">
    <property type="term" value="C:small ribosomal subunit"/>
    <property type="evidence" value="ECO:0007669"/>
    <property type="project" value="InterPro"/>
</dbReference>
<dbReference type="GO" id="GO:0019843">
    <property type="term" value="F:rRNA binding"/>
    <property type="evidence" value="ECO:0007669"/>
    <property type="project" value="UniProtKB-UniRule"/>
</dbReference>
<dbReference type="GO" id="GO:0003735">
    <property type="term" value="F:structural constituent of ribosome"/>
    <property type="evidence" value="ECO:0007669"/>
    <property type="project" value="InterPro"/>
</dbReference>
<dbReference type="GO" id="GO:0006412">
    <property type="term" value="P:translation"/>
    <property type="evidence" value="ECO:0007669"/>
    <property type="project" value="UniProtKB-UniRule"/>
</dbReference>
<dbReference type="FunFam" id="3.30.160.20:FF:000001">
    <property type="entry name" value="30S ribosomal protein S5"/>
    <property type="match status" value="1"/>
</dbReference>
<dbReference type="FunFam" id="3.30.230.10:FF:000002">
    <property type="entry name" value="30S ribosomal protein S5"/>
    <property type="match status" value="1"/>
</dbReference>
<dbReference type="Gene3D" id="3.30.160.20">
    <property type="match status" value="1"/>
</dbReference>
<dbReference type="Gene3D" id="3.30.230.10">
    <property type="match status" value="1"/>
</dbReference>
<dbReference type="HAMAP" id="MF_01307_B">
    <property type="entry name" value="Ribosomal_uS5_B"/>
    <property type="match status" value="1"/>
</dbReference>
<dbReference type="InterPro" id="IPR020568">
    <property type="entry name" value="Ribosomal_Su5_D2-typ_SF"/>
</dbReference>
<dbReference type="InterPro" id="IPR000851">
    <property type="entry name" value="Ribosomal_uS5"/>
</dbReference>
<dbReference type="InterPro" id="IPR005712">
    <property type="entry name" value="Ribosomal_uS5_bac-type"/>
</dbReference>
<dbReference type="InterPro" id="IPR005324">
    <property type="entry name" value="Ribosomal_uS5_C"/>
</dbReference>
<dbReference type="InterPro" id="IPR013810">
    <property type="entry name" value="Ribosomal_uS5_N"/>
</dbReference>
<dbReference type="InterPro" id="IPR018192">
    <property type="entry name" value="Ribosomal_uS5_N_CS"/>
</dbReference>
<dbReference type="InterPro" id="IPR014721">
    <property type="entry name" value="Ribsml_uS5_D2-typ_fold_subgr"/>
</dbReference>
<dbReference type="NCBIfam" id="TIGR01021">
    <property type="entry name" value="rpsE_bact"/>
    <property type="match status" value="1"/>
</dbReference>
<dbReference type="PANTHER" id="PTHR48277">
    <property type="entry name" value="MITOCHONDRIAL RIBOSOMAL PROTEIN S5"/>
    <property type="match status" value="1"/>
</dbReference>
<dbReference type="PANTHER" id="PTHR48277:SF1">
    <property type="entry name" value="MITOCHONDRIAL RIBOSOMAL PROTEIN S5"/>
    <property type="match status" value="1"/>
</dbReference>
<dbReference type="Pfam" id="PF00333">
    <property type="entry name" value="Ribosomal_S5"/>
    <property type="match status" value="1"/>
</dbReference>
<dbReference type="Pfam" id="PF03719">
    <property type="entry name" value="Ribosomal_S5_C"/>
    <property type="match status" value="1"/>
</dbReference>
<dbReference type="SUPFAM" id="SSF54768">
    <property type="entry name" value="dsRNA-binding domain-like"/>
    <property type="match status" value="1"/>
</dbReference>
<dbReference type="SUPFAM" id="SSF54211">
    <property type="entry name" value="Ribosomal protein S5 domain 2-like"/>
    <property type="match status" value="1"/>
</dbReference>
<dbReference type="PROSITE" id="PS00585">
    <property type="entry name" value="RIBOSOMAL_S5"/>
    <property type="match status" value="1"/>
</dbReference>
<dbReference type="PROSITE" id="PS50881">
    <property type="entry name" value="S5_DSRBD"/>
    <property type="match status" value="1"/>
</dbReference>
<gene>
    <name evidence="1" type="primary">rpsE</name>
    <name type="ordered locus">Bcer98_0121</name>
</gene>